<sequence>MRKIKRNDEVIVITGKDKGKRGKVNRVLSDDRLIVSGVQIIKKHQKPNPQMGIAGGIIEKEAPIQASNVAIFNPATNKADRVGFKLQEDGNKIRVFKSNGEAIDA</sequence>
<reference key="1">
    <citation type="journal article" date="2008" name="PLoS Genet.">
        <title>Complete genome sequence of the complex carbohydrate-degrading marine bacterium, Saccharophagus degradans strain 2-40 T.</title>
        <authorList>
            <person name="Weiner R.M."/>
            <person name="Taylor L.E. II"/>
            <person name="Henrissat B."/>
            <person name="Hauser L."/>
            <person name="Land M."/>
            <person name="Coutinho P.M."/>
            <person name="Rancurel C."/>
            <person name="Saunders E.H."/>
            <person name="Longmire A.G."/>
            <person name="Zhang H."/>
            <person name="Bayer E.A."/>
            <person name="Gilbert H.J."/>
            <person name="Larimer F."/>
            <person name="Zhulin I.B."/>
            <person name="Ekborg N.A."/>
            <person name="Lamed R."/>
            <person name="Richardson P.M."/>
            <person name="Borovok I."/>
            <person name="Hutcheson S."/>
        </authorList>
    </citation>
    <scope>NUCLEOTIDE SEQUENCE [LARGE SCALE GENOMIC DNA]</scope>
    <source>
        <strain>2-40 / ATCC 43961 / DSM 17024</strain>
    </source>
</reference>
<gene>
    <name evidence="1" type="primary">rplX</name>
    <name type="ordered locus">Sde_0970</name>
</gene>
<dbReference type="EMBL" id="CP000282">
    <property type="protein sequence ID" value="ABD80232.1"/>
    <property type="molecule type" value="Genomic_DNA"/>
</dbReference>
<dbReference type="RefSeq" id="WP_011467452.1">
    <property type="nucleotide sequence ID" value="NC_007912.1"/>
</dbReference>
<dbReference type="SMR" id="Q21M47"/>
<dbReference type="STRING" id="203122.Sde_0970"/>
<dbReference type="GeneID" id="98612656"/>
<dbReference type="KEGG" id="sde:Sde_0970"/>
<dbReference type="eggNOG" id="COG0198">
    <property type="taxonomic scope" value="Bacteria"/>
</dbReference>
<dbReference type="HOGENOM" id="CLU_093315_2_2_6"/>
<dbReference type="OrthoDB" id="9807419at2"/>
<dbReference type="Proteomes" id="UP000001947">
    <property type="component" value="Chromosome"/>
</dbReference>
<dbReference type="GO" id="GO:1990904">
    <property type="term" value="C:ribonucleoprotein complex"/>
    <property type="evidence" value="ECO:0007669"/>
    <property type="project" value="UniProtKB-KW"/>
</dbReference>
<dbReference type="GO" id="GO:0005840">
    <property type="term" value="C:ribosome"/>
    <property type="evidence" value="ECO:0007669"/>
    <property type="project" value="UniProtKB-KW"/>
</dbReference>
<dbReference type="GO" id="GO:0019843">
    <property type="term" value="F:rRNA binding"/>
    <property type="evidence" value="ECO:0007669"/>
    <property type="project" value="UniProtKB-UniRule"/>
</dbReference>
<dbReference type="GO" id="GO:0003735">
    <property type="term" value="F:structural constituent of ribosome"/>
    <property type="evidence" value="ECO:0007669"/>
    <property type="project" value="InterPro"/>
</dbReference>
<dbReference type="GO" id="GO:0006412">
    <property type="term" value="P:translation"/>
    <property type="evidence" value="ECO:0007669"/>
    <property type="project" value="UniProtKB-UniRule"/>
</dbReference>
<dbReference type="CDD" id="cd06089">
    <property type="entry name" value="KOW_RPL26"/>
    <property type="match status" value="1"/>
</dbReference>
<dbReference type="FunFam" id="2.30.30.30:FF:000004">
    <property type="entry name" value="50S ribosomal protein L24"/>
    <property type="match status" value="1"/>
</dbReference>
<dbReference type="Gene3D" id="2.30.30.30">
    <property type="match status" value="1"/>
</dbReference>
<dbReference type="HAMAP" id="MF_01326_B">
    <property type="entry name" value="Ribosomal_uL24_B"/>
    <property type="match status" value="1"/>
</dbReference>
<dbReference type="InterPro" id="IPR005824">
    <property type="entry name" value="KOW"/>
</dbReference>
<dbReference type="InterPro" id="IPR014722">
    <property type="entry name" value="Rib_uL2_dom2"/>
</dbReference>
<dbReference type="InterPro" id="IPR003256">
    <property type="entry name" value="Ribosomal_uL24"/>
</dbReference>
<dbReference type="InterPro" id="IPR005825">
    <property type="entry name" value="Ribosomal_uL24_CS"/>
</dbReference>
<dbReference type="InterPro" id="IPR041988">
    <property type="entry name" value="Ribosomal_uL24_KOW"/>
</dbReference>
<dbReference type="InterPro" id="IPR008991">
    <property type="entry name" value="Translation_prot_SH3-like_sf"/>
</dbReference>
<dbReference type="NCBIfam" id="TIGR01079">
    <property type="entry name" value="rplX_bact"/>
    <property type="match status" value="1"/>
</dbReference>
<dbReference type="PANTHER" id="PTHR12903">
    <property type="entry name" value="MITOCHONDRIAL RIBOSOMAL PROTEIN L24"/>
    <property type="match status" value="1"/>
</dbReference>
<dbReference type="Pfam" id="PF00467">
    <property type="entry name" value="KOW"/>
    <property type="match status" value="1"/>
</dbReference>
<dbReference type="Pfam" id="PF17136">
    <property type="entry name" value="ribosomal_L24"/>
    <property type="match status" value="1"/>
</dbReference>
<dbReference type="SMART" id="SM00739">
    <property type="entry name" value="KOW"/>
    <property type="match status" value="1"/>
</dbReference>
<dbReference type="SUPFAM" id="SSF50104">
    <property type="entry name" value="Translation proteins SH3-like domain"/>
    <property type="match status" value="1"/>
</dbReference>
<dbReference type="PROSITE" id="PS01108">
    <property type="entry name" value="RIBOSOMAL_L24"/>
    <property type="match status" value="1"/>
</dbReference>
<protein>
    <recommendedName>
        <fullName evidence="1">Large ribosomal subunit protein uL24</fullName>
    </recommendedName>
    <alternativeName>
        <fullName evidence="2">50S ribosomal protein L24</fullName>
    </alternativeName>
</protein>
<organism>
    <name type="scientific">Saccharophagus degradans (strain 2-40 / ATCC 43961 / DSM 17024)</name>
    <dbReference type="NCBI Taxonomy" id="203122"/>
    <lineage>
        <taxon>Bacteria</taxon>
        <taxon>Pseudomonadati</taxon>
        <taxon>Pseudomonadota</taxon>
        <taxon>Gammaproteobacteria</taxon>
        <taxon>Cellvibrionales</taxon>
        <taxon>Cellvibrionaceae</taxon>
        <taxon>Saccharophagus</taxon>
    </lineage>
</organism>
<name>RL24_SACD2</name>
<comment type="function">
    <text evidence="1">One of two assembly initiator proteins, it binds directly to the 5'-end of the 23S rRNA, where it nucleates assembly of the 50S subunit.</text>
</comment>
<comment type="function">
    <text evidence="1">One of the proteins that surrounds the polypeptide exit tunnel on the outside of the subunit.</text>
</comment>
<comment type="subunit">
    <text evidence="1">Part of the 50S ribosomal subunit.</text>
</comment>
<comment type="similarity">
    <text evidence="1">Belongs to the universal ribosomal protein uL24 family.</text>
</comment>
<proteinExistence type="inferred from homology"/>
<feature type="chain" id="PRO_0000241657" description="Large ribosomal subunit protein uL24">
    <location>
        <begin position="1"/>
        <end position="105"/>
    </location>
</feature>
<accession>Q21M47</accession>
<keyword id="KW-1185">Reference proteome</keyword>
<keyword id="KW-0687">Ribonucleoprotein</keyword>
<keyword id="KW-0689">Ribosomal protein</keyword>
<keyword id="KW-0694">RNA-binding</keyword>
<keyword id="KW-0699">rRNA-binding</keyword>
<evidence type="ECO:0000255" key="1">
    <source>
        <dbReference type="HAMAP-Rule" id="MF_01326"/>
    </source>
</evidence>
<evidence type="ECO:0000305" key="2"/>